<organism>
    <name type="scientific">Escherichia coli (strain UTI89 / UPEC)</name>
    <dbReference type="NCBI Taxonomy" id="364106"/>
    <lineage>
        <taxon>Bacteria</taxon>
        <taxon>Pseudomonadati</taxon>
        <taxon>Pseudomonadota</taxon>
        <taxon>Gammaproteobacteria</taxon>
        <taxon>Enterobacterales</taxon>
        <taxon>Enterobacteriaceae</taxon>
        <taxon>Escherichia</taxon>
    </lineage>
</organism>
<feature type="chain" id="PRO_1000009012" description="Adenylyl-sulfate kinase">
    <location>
        <begin position="1"/>
        <end position="201"/>
    </location>
</feature>
<feature type="region of interest" description="Disordered" evidence="2">
    <location>
        <begin position="1"/>
        <end position="23"/>
    </location>
</feature>
<feature type="active site" description="Phosphoserine intermediate" evidence="1">
    <location>
        <position position="109"/>
    </location>
</feature>
<feature type="binding site" evidence="1">
    <location>
        <begin position="35"/>
        <end position="42"/>
    </location>
    <ligand>
        <name>ATP</name>
        <dbReference type="ChEBI" id="CHEBI:30616"/>
    </ligand>
</feature>
<gene>
    <name evidence="1" type="primary">cysC</name>
    <name type="ordered locus">UTI89_C3121</name>
</gene>
<proteinExistence type="inferred from homology"/>
<dbReference type="EC" id="2.7.1.25" evidence="1"/>
<dbReference type="EMBL" id="CP000243">
    <property type="protein sequence ID" value="ABE08573.1"/>
    <property type="molecule type" value="Genomic_DNA"/>
</dbReference>
<dbReference type="RefSeq" id="WP_001173653.1">
    <property type="nucleotide sequence ID" value="NZ_CP064825.1"/>
</dbReference>
<dbReference type="SMR" id="Q1R7U1"/>
<dbReference type="KEGG" id="eci:UTI89_C3121"/>
<dbReference type="HOGENOM" id="CLU_046932_1_0_6"/>
<dbReference type="UniPathway" id="UPA00140">
    <property type="reaction ID" value="UER00205"/>
</dbReference>
<dbReference type="Proteomes" id="UP000001952">
    <property type="component" value="Chromosome"/>
</dbReference>
<dbReference type="GO" id="GO:0004020">
    <property type="term" value="F:adenylylsulfate kinase activity"/>
    <property type="evidence" value="ECO:0007669"/>
    <property type="project" value="UniProtKB-UniRule"/>
</dbReference>
<dbReference type="GO" id="GO:0005524">
    <property type="term" value="F:ATP binding"/>
    <property type="evidence" value="ECO:0007669"/>
    <property type="project" value="UniProtKB-UniRule"/>
</dbReference>
<dbReference type="GO" id="GO:0070814">
    <property type="term" value="P:hydrogen sulfide biosynthetic process"/>
    <property type="evidence" value="ECO:0007669"/>
    <property type="project" value="UniProtKB-UniRule"/>
</dbReference>
<dbReference type="GO" id="GO:0000103">
    <property type="term" value="P:sulfate assimilation"/>
    <property type="evidence" value="ECO:0007669"/>
    <property type="project" value="UniProtKB-UniRule"/>
</dbReference>
<dbReference type="CDD" id="cd02027">
    <property type="entry name" value="APSK"/>
    <property type="match status" value="1"/>
</dbReference>
<dbReference type="FunFam" id="3.40.50.300:FF:000212">
    <property type="entry name" value="Adenylyl-sulfate kinase"/>
    <property type="match status" value="1"/>
</dbReference>
<dbReference type="Gene3D" id="3.40.50.300">
    <property type="entry name" value="P-loop containing nucleotide triphosphate hydrolases"/>
    <property type="match status" value="1"/>
</dbReference>
<dbReference type="HAMAP" id="MF_00065">
    <property type="entry name" value="Adenylyl_sulf_kinase"/>
    <property type="match status" value="1"/>
</dbReference>
<dbReference type="InterPro" id="IPR002891">
    <property type="entry name" value="APS_kinase"/>
</dbReference>
<dbReference type="InterPro" id="IPR027417">
    <property type="entry name" value="P-loop_NTPase"/>
</dbReference>
<dbReference type="NCBIfam" id="TIGR00455">
    <property type="entry name" value="apsK"/>
    <property type="match status" value="1"/>
</dbReference>
<dbReference type="NCBIfam" id="NF003013">
    <property type="entry name" value="PRK03846.1"/>
    <property type="match status" value="1"/>
</dbReference>
<dbReference type="PANTHER" id="PTHR11055:SF63">
    <property type="entry name" value="ADENYLYL-SULFATE KINASE 1, CHLOROPLASTIC"/>
    <property type="match status" value="1"/>
</dbReference>
<dbReference type="PANTHER" id="PTHR11055">
    <property type="entry name" value="BIFUNCTIONAL 3'-PHOSPHOADENOSINE 5'-PHOSPHOSULFATE SYNTHASE"/>
    <property type="match status" value="1"/>
</dbReference>
<dbReference type="Pfam" id="PF01583">
    <property type="entry name" value="APS_kinase"/>
    <property type="match status" value="1"/>
</dbReference>
<dbReference type="SUPFAM" id="SSF52540">
    <property type="entry name" value="P-loop containing nucleoside triphosphate hydrolases"/>
    <property type="match status" value="1"/>
</dbReference>
<protein>
    <recommendedName>
        <fullName evidence="1">Adenylyl-sulfate kinase</fullName>
        <ecNumber evidence="1">2.7.1.25</ecNumber>
    </recommendedName>
    <alternativeName>
        <fullName evidence="1">APS kinase</fullName>
    </alternativeName>
    <alternativeName>
        <fullName evidence="1">ATP adenosine-5'-phosphosulfate 3'-phosphotransferase</fullName>
    </alternativeName>
    <alternativeName>
        <fullName evidence="1">Adenosine-5'-phosphosulfate kinase</fullName>
    </alternativeName>
</protein>
<sequence length="201" mass="22334">MALHDENVVWHSHPVTPQQREQHHGHRGVVLWFTGLSGSGKSTVAGALEEALHKLGVSTYLLDGDNVRHGLCSDLGFSDADRKENIRRVGEVANLMVEAGLVVLTAFISPHRAERQMVRERVGEGRFIEVFVDTPLAICEARDPKGLYKKARAGELRNFTGIDSVYEAPESAEIHLNGEQLVTNLVQQLLDLLRQNDIIRS</sequence>
<accession>Q1R7U1</accession>
<keyword id="KW-0067">ATP-binding</keyword>
<keyword id="KW-0418">Kinase</keyword>
<keyword id="KW-0547">Nucleotide-binding</keyword>
<keyword id="KW-0597">Phosphoprotein</keyword>
<keyword id="KW-0808">Transferase</keyword>
<reference key="1">
    <citation type="journal article" date="2006" name="Proc. Natl. Acad. Sci. U.S.A.">
        <title>Identification of genes subject to positive selection in uropathogenic strains of Escherichia coli: a comparative genomics approach.</title>
        <authorList>
            <person name="Chen S.L."/>
            <person name="Hung C.-S."/>
            <person name="Xu J."/>
            <person name="Reigstad C.S."/>
            <person name="Magrini V."/>
            <person name="Sabo A."/>
            <person name="Blasiar D."/>
            <person name="Bieri T."/>
            <person name="Meyer R.R."/>
            <person name="Ozersky P."/>
            <person name="Armstrong J.R."/>
            <person name="Fulton R.S."/>
            <person name="Latreille J.P."/>
            <person name="Spieth J."/>
            <person name="Hooton T.M."/>
            <person name="Mardis E.R."/>
            <person name="Hultgren S.J."/>
            <person name="Gordon J.I."/>
        </authorList>
    </citation>
    <scope>NUCLEOTIDE SEQUENCE [LARGE SCALE GENOMIC DNA]</scope>
    <source>
        <strain>UTI89 / UPEC</strain>
    </source>
</reference>
<comment type="function">
    <text evidence="1">Catalyzes the synthesis of activated sulfate.</text>
</comment>
<comment type="catalytic activity">
    <reaction evidence="1">
        <text>adenosine 5'-phosphosulfate + ATP = 3'-phosphoadenylyl sulfate + ADP + H(+)</text>
        <dbReference type="Rhea" id="RHEA:24152"/>
        <dbReference type="ChEBI" id="CHEBI:15378"/>
        <dbReference type="ChEBI" id="CHEBI:30616"/>
        <dbReference type="ChEBI" id="CHEBI:58243"/>
        <dbReference type="ChEBI" id="CHEBI:58339"/>
        <dbReference type="ChEBI" id="CHEBI:456216"/>
        <dbReference type="EC" id="2.7.1.25"/>
    </reaction>
</comment>
<comment type="pathway">
    <text evidence="1">Sulfur metabolism; hydrogen sulfide biosynthesis; sulfite from sulfate: step 2/3.</text>
</comment>
<comment type="similarity">
    <text evidence="1">Belongs to the APS kinase family.</text>
</comment>
<name>CYSC_ECOUT</name>
<evidence type="ECO:0000255" key="1">
    <source>
        <dbReference type="HAMAP-Rule" id="MF_00065"/>
    </source>
</evidence>
<evidence type="ECO:0000256" key="2">
    <source>
        <dbReference type="SAM" id="MobiDB-lite"/>
    </source>
</evidence>